<reference key="1">
    <citation type="journal article" date="2006" name="J. Thromb. Haemost.">
        <title>Characterization of bitiscetin-2, a second form of bitiscetin from the venom of Bitis arietans: comparison of its binding site with the collagen-binding site on the von Willebrand factor A3-domain.</title>
        <authorList>
            <person name="Obert B."/>
            <person name="Romijn R.A."/>
            <person name="Houllier A."/>
            <person name="Huizinga E.G."/>
            <person name="Girma J.P."/>
        </authorList>
    </citation>
    <scope>PROTEIN SEQUENCE</scope>
    <scope>FUNCTION</scope>
    <source>
        <tissue>Venom</tissue>
    </source>
</reference>
<reference key="2">
    <citation type="journal article" date="1999" name="Blood">
        <title>Conformational changes in the A3 domain of von Willebrand factor modulate the interaction of the A1 domain with platelet glycoprotein Ib.</title>
        <authorList>
            <person name="Obert B."/>
            <person name="Houllier A."/>
            <person name="Meyer D."/>
            <person name="Girma J.P."/>
        </authorList>
    </citation>
    <scope>FUNCTION</scope>
    <source>
        <tissue>Venom</tissue>
    </source>
</reference>
<reference key="3">
    <citation type="journal article" date="2002" name="Biochemistry">
        <title>Binding site on human von Willebrand factor of bitiscetin, a snake venom-derived platelet aggregation inducer.</title>
        <authorList>
            <person name="Matsui T."/>
            <person name="Hamako J."/>
            <person name="Matsushita T."/>
            <person name="Nakayama T."/>
            <person name="Fujimura Y."/>
            <person name="Titani K."/>
        </authorList>
    </citation>
    <scope>FUNCTION</scope>
    <scope>SUBUNIT</scope>
    <source>
        <tissue>Venom</tissue>
    </source>
</reference>
<feature type="chain" id="PRO_0000355242" description="Snaclec bitiscetin-2">
    <location>
        <begin position="1"/>
        <end position="12" status="greater than"/>
    </location>
</feature>
<feature type="domain" description="C-type lectin" evidence="1">
    <location>
        <begin position="11"/>
        <end position="12" status="greater than"/>
    </location>
</feature>
<feature type="non-terminal residue">
    <location>
        <position position="12"/>
    </location>
</feature>
<proteinExistence type="evidence at protein level"/>
<protein>
    <recommendedName>
        <fullName>Snaclec bitiscetin-2</fullName>
    </recommendedName>
</protein>
<dbReference type="GO" id="GO:0005576">
    <property type="term" value="C:extracellular region"/>
    <property type="evidence" value="ECO:0007669"/>
    <property type="project" value="UniProtKB-SubCell"/>
</dbReference>
<dbReference type="GO" id="GO:0090729">
    <property type="term" value="F:toxin activity"/>
    <property type="evidence" value="ECO:0007669"/>
    <property type="project" value="UniProtKB-KW"/>
</dbReference>
<sequence>DEGCLPDDSSRT</sequence>
<comment type="function">
    <text evidence="2 3 4">Snaclec that binds to von Willebrand factor (VWF) and induces its interaction with GPIbalpha (GP1BA), resulting in platelet aggregation. In contrary to bitiscetin, it does not bind to the A1 domain. Instead, it interacts with the collagen-binding A3 domain of vWF. Also interferes with the binding of vWF to collagen.</text>
</comment>
<comment type="subunit">
    <text evidence="3">Dimer.</text>
</comment>
<comment type="subcellular location">
    <subcellularLocation>
        <location>Secreted</location>
    </subcellularLocation>
</comment>
<comment type="tissue specificity">
    <text>Expressed by the venom gland.</text>
</comment>
<comment type="similarity">
    <text evidence="5">Belongs to the snaclec family.</text>
</comment>
<keyword id="KW-0903">Direct protein sequencing</keyword>
<keyword id="KW-1199">Hemostasis impairing toxin</keyword>
<keyword id="KW-1202">Platelet aggregation activating toxin</keyword>
<keyword id="KW-0964">Secreted</keyword>
<keyword id="KW-0800">Toxin</keyword>
<evidence type="ECO:0000255" key="1">
    <source>
        <dbReference type="PROSITE-ProRule" id="PRU00040"/>
    </source>
</evidence>
<evidence type="ECO:0000269" key="2">
    <source>
    </source>
</evidence>
<evidence type="ECO:0000269" key="3">
    <source>
    </source>
</evidence>
<evidence type="ECO:0000269" key="4">
    <source>
    </source>
</evidence>
<evidence type="ECO:0000305" key="5"/>
<name>SL2_BITAR</name>
<accession>P0C8I8</accession>
<organism>
    <name type="scientific">Bitis arietans</name>
    <name type="common">African puff adder</name>
    <dbReference type="NCBI Taxonomy" id="8692"/>
    <lineage>
        <taxon>Eukaryota</taxon>
        <taxon>Metazoa</taxon>
        <taxon>Chordata</taxon>
        <taxon>Craniata</taxon>
        <taxon>Vertebrata</taxon>
        <taxon>Euteleostomi</taxon>
        <taxon>Lepidosauria</taxon>
        <taxon>Squamata</taxon>
        <taxon>Bifurcata</taxon>
        <taxon>Unidentata</taxon>
        <taxon>Episquamata</taxon>
        <taxon>Toxicofera</taxon>
        <taxon>Serpentes</taxon>
        <taxon>Colubroidea</taxon>
        <taxon>Viperidae</taxon>
        <taxon>Viperinae</taxon>
        <taxon>Bitis</taxon>
    </lineage>
</organism>